<keyword id="KW-0052">Apoplast</keyword>
<keyword id="KW-0927">Auxin signaling pathway</keyword>
<keyword id="KW-0134">Cell wall</keyword>
<keyword id="KW-1015">Disulfide bond</keyword>
<keyword id="KW-0325">Glycoprotein</keyword>
<keyword id="KW-0464">Manganese</keyword>
<keyword id="KW-0479">Metal-binding</keyword>
<keyword id="KW-0675">Receptor</keyword>
<keyword id="KW-0964">Secreted</keyword>
<keyword id="KW-0732">Signal</keyword>
<comment type="function">
    <text>Probable receptor for the plant growth-promoting hormone auxin.</text>
</comment>
<comment type="subunit">
    <text>Interacts with ABP20.</text>
</comment>
<comment type="subcellular location">
    <subcellularLocation>
        <location>Secreted</location>
        <location>Extracellular space</location>
        <location>Apoplast</location>
    </subcellularLocation>
    <subcellularLocation>
        <location>Secreted</location>
        <location>Cell wall</location>
    </subcellularLocation>
</comment>
<comment type="similarity">
    <text evidence="3">Belongs to the germin family.</text>
</comment>
<sequence length="209" mass="21856">MIFPIFFTFFLLLSTSHASVQDFCVADYKAPDGPAGYSCKKPAIVTVNDFVYSGLGIAGNTTNIFKAAVTPAFAAQFPGVNGLGISLARLDLGPGGVVPFHTHPGASEVLLVVQGTIIAGFVASDNTPYLKTLKKGDIIVFPQGLLHFQVNGGDTPAIAFPSFSSPSPGLQIVDFALFKNDLATELIAQTTLLDAPQIKKLKGVLGGTN</sequence>
<organism>
    <name type="scientific">Prunus persica</name>
    <name type="common">Peach</name>
    <name type="synonym">Amygdalus persica</name>
    <dbReference type="NCBI Taxonomy" id="3760"/>
    <lineage>
        <taxon>Eukaryota</taxon>
        <taxon>Viridiplantae</taxon>
        <taxon>Streptophyta</taxon>
        <taxon>Embryophyta</taxon>
        <taxon>Tracheophyta</taxon>
        <taxon>Spermatophyta</taxon>
        <taxon>Magnoliopsida</taxon>
        <taxon>eudicotyledons</taxon>
        <taxon>Gunneridae</taxon>
        <taxon>Pentapetalae</taxon>
        <taxon>rosids</taxon>
        <taxon>fabids</taxon>
        <taxon>Rosales</taxon>
        <taxon>Rosaceae</taxon>
        <taxon>Amygdaloideae</taxon>
        <taxon>Amygdaleae</taxon>
        <taxon>Prunus</taxon>
    </lineage>
</organism>
<feature type="signal peptide" evidence="2">
    <location>
        <begin position="1"/>
        <end position="18"/>
    </location>
</feature>
<feature type="chain" id="PRO_0000010844" description="Auxin-binding protein ABP19b">
    <location>
        <begin position="19"/>
        <end position="209"/>
    </location>
</feature>
<feature type="domain" description="Cupin type-1" evidence="2">
    <location>
        <begin position="53"/>
        <end position="199"/>
    </location>
</feature>
<feature type="binding site" evidence="1">
    <location>
        <position position="101"/>
    </location>
    <ligand>
        <name>Mn(2+)</name>
        <dbReference type="ChEBI" id="CHEBI:29035"/>
    </ligand>
</feature>
<feature type="binding site" evidence="1">
    <location>
        <position position="103"/>
    </location>
    <ligand>
        <name>Mn(2+)</name>
        <dbReference type="ChEBI" id="CHEBI:29035"/>
    </ligand>
</feature>
<feature type="binding site" evidence="1">
    <location>
        <position position="108"/>
    </location>
    <ligand>
        <name>Mn(2+)</name>
        <dbReference type="ChEBI" id="CHEBI:29035"/>
    </ligand>
</feature>
<feature type="binding site" evidence="1">
    <location>
        <position position="147"/>
    </location>
    <ligand>
        <name>Mn(2+)</name>
        <dbReference type="ChEBI" id="CHEBI:29035"/>
    </ligand>
</feature>
<feature type="glycosylation site" description="N-linked (GlcNAc...) asparagine" evidence="2">
    <location>
        <position position="60"/>
    </location>
</feature>
<feature type="disulfide bond" evidence="1">
    <location>
        <begin position="24"/>
        <end position="39"/>
    </location>
</feature>
<accession>O04012</accession>
<gene>
    <name type="primary">ABP19B</name>
</gene>
<name>AB19B_PRUPE</name>
<evidence type="ECO:0000250" key="1"/>
<evidence type="ECO:0000255" key="2"/>
<evidence type="ECO:0000305" key="3"/>
<reference key="1">
    <citation type="journal article" date="1998" name="Plant Cell Physiol.">
        <title>Cloning of genes encoding auxin-binding proteins (ABP19/20) from peach: significant peptide sequence similarity with germin-like proteins.</title>
        <authorList>
            <person name="Ohmiya A."/>
            <person name="Tanaka Y."/>
            <person name="Kadowaki K."/>
            <person name="Hayashi T."/>
        </authorList>
    </citation>
    <scope>NUCLEOTIDE SEQUENCE [GENOMIC DNA]</scope>
    <source>
        <strain>cv. Akatsuki</strain>
        <tissue>Shoot apex</tissue>
    </source>
</reference>
<dbReference type="EMBL" id="U81163">
    <property type="protein sequence ID" value="AAB51241.1"/>
    <property type="molecule type" value="Genomic_DNA"/>
</dbReference>
<dbReference type="SMR" id="O04012"/>
<dbReference type="GlyCosmos" id="O04012">
    <property type="glycosylation" value="1 site, No reported glycans"/>
</dbReference>
<dbReference type="eggNOG" id="ENOG502QT7C">
    <property type="taxonomic scope" value="Eukaryota"/>
</dbReference>
<dbReference type="GO" id="GO:0048046">
    <property type="term" value="C:apoplast"/>
    <property type="evidence" value="ECO:0007669"/>
    <property type="project" value="UniProtKB-SubCell"/>
</dbReference>
<dbReference type="GO" id="GO:0030145">
    <property type="term" value="F:manganese ion binding"/>
    <property type="evidence" value="ECO:0007669"/>
    <property type="project" value="InterPro"/>
</dbReference>
<dbReference type="GO" id="GO:0009734">
    <property type="term" value="P:auxin-activated signaling pathway"/>
    <property type="evidence" value="ECO:0007669"/>
    <property type="project" value="UniProtKB-KW"/>
</dbReference>
<dbReference type="CDD" id="cd02241">
    <property type="entry name" value="cupin_OxOx"/>
    <property type="match status" value="1"/>
</dbReference>
<dbReference type="FunFam" id="2.60.120.10:FF:000047">
    <property type="entry name" value="Auxin-binding protein ABP19a"/>
    <property type="match status" value="1"/>
</dbReference>
<dbReference type="Gene3D" id="2.60.120.10">
    <property type="entry name" value="Jelly Rolls"/>
    <property type="match status" value="1"/>
</dbReference>
<dbReference type="InterPro" id="IPR006045">
    <property type="entry name" value="Cupin_1"/>
</dbReference>
<dbReference type="InterPro" id="IPR001929">
    <property type="entry name" value="Germin"/>
</dbReference>
<dbReference type="InterPro" id="IPR019780">
    <property type="entry name" value="Germin_Mn-BS"/>
</dbReference>
<dbReference type="InterPro" id="IPR014710">
    <property type="entry name" value="RmlC-like_jellyroll"/>
</dbReference>
<dbReference type="InterPro" id="IPR011051">
    <property type="entry name" value="RmlC_Cupin_sf"/>
</dbReference>
<dbReference type="PANTHER" id="PTHR31238">
    <property type="entry name" value="GERMIN-LIKE PROTEIN SUBFAMILY 3 MEMBER 3"/>
    <property type="match status" value="1"/>
</dbReference>
<dbReference type="Pfam" id="PF00190">
    <property type="entry name" value="Cupin_1"/>
    <property type="match status" value="1"/>
</dbReference>
<dbReference type="PRINTS" id="PR00325">
    <property type="entry name" value="GERMIN"/>
</dbReference>
<dbReference type="SMART" id="SM00835">
    <property type="entry name" value="Cupin_1"/>
    <property type="match status" value="1"/>
</dbReference>
<dbReference type="SUPFAM" id="SSF51182">
    <property type="entry name" value="RmlC-like cupins"/>
    <property type="match status" value="1"/>
</dbReference>
<dbReference type="PROSITE" id="PS00725">
    <property type="entry name" value="GERMIN"/>
    <property type="match status" value="1"/>
</dbReference>
<proteinExistence type="inferred from homology"/>
<protein>
    <recommendedName>
        <fullName>Auxin-binding protein ABP19b</fullName>
    </recommendedName>
</protein>